<gene>
    <name evidence="13" type="primary">stcW</name>
    <name type="ORF">AN7804</name>
</gene>
<name>STCW_EMENI</name>
<comment type="function">
    <text evidence="2 4 5 7 8 9 10 12 16">FAD-binding monooxygenase; part of the gene cluster that mediates the biosynthesis of sterigmatocystin (ST), a polyketide-derived furanocoumarin which is part of the most toxic and carcinogenic compounds among the known mycotoxins (PubMed:10618248, PubMed:8643646). The first step in the biosynthesis of sterigmatocystin is the production of hexanoate by the fatty acid synthase (FAS) units stcJ and stcK (PubMed:8962148). The polyketide backbone is assembled by the non-reducing polyketide synthase stcA by condensation of the starter hexanoyl-CoA and 7 malonyl-CoA extender units followed by cyclization and release of norsolorinic acid (By similarity). Norsolorinic acid is the first stable intermediate in the biosynthesis of sterigmatocystin and is converted into averantin (AVN) by the ketoreductase stcE which reduces the hexanoate ketone to an alcohol (Probable) (PubMed:8643646). Averantin is then oxidized into 5'-hydroxyaverantin (HAVN) by the cytochrome P450 monooxygenase stcF (PubMed:10618248). 5'-hydroxyaverantin is further converted to 5'-oxyaverantin (OAVN) by the 5'-hydroxyaverantin dehydrogenase stcG (PubMed:24957370). The next step is the conversion of OAVN into averufin (AVF) which is catalyzed by a yet to be identified enzyme (PubMed:24957370). The cytochrome P450 monooxygenase stcB and the flavin-binding monooxygenase stcW are both required for the conversion of averufin to 1-hydroxyversicolorone (PubMed:10618248). The esterase stcI probably catalyzes the formation of versiconal hemiacetal acetate from 1-hydroxyversicolorone (PubMed:24957370). The oxydoreductase stcN then probably catalyzes the biosynthetic step from versiconal to versicolorin B (VERB) (PubMed:24957370). The next step is performed by the versicolorin B desaturase stcL to produce versicolorin A (VERA) (PubMed:8999832). The ketoreductase stcU and the cytochrome P450 monooxygenase stcS are involved in the conversion of versicolorin A to demethylsterigmatocystin (PubMed:7486998). The Baeyer-Villiger oxidas stcQ and the reductase stcR might be involved in the biosynthetic step from versicolorin A to demethylsterigmatocystin (PubMed:24957370). The final step in the biosynthesis of sterigmatocystin is the methylation of demethylsterigmatocystin catalyzed by the methyltransferase stcP (PubMed:8900026).</text>
</comment>
<comment type="cofactor">
    <cofactor evidence="14">
        <name>FAD</name>
        <dbReference type="ChEBI" id="CHEBI:57692"/>
    </cofactor>
</comment>
<comment type="pathway">
    <text evidence="4 7">Mycotoxin biosynthesis; sterigmatocystin biosynthesis.</text>
</comment>
<comment type="induction">
    <text evidence="6 7 11">The genes forming the sterigmatocystin biosynthesis cluster are co-regulated and induced on oatmeal porridge or the fungal isolates were grown either on oatmeal porridge or in YEC medium (0.2% yeast extract, 5.0% corn steep liquor) (PubMed:8017929, PubMed:8643646). Expression is positively regulated by the cluster-specific transcription factor aflR that binds the palindromic sequence 5'-TCG(N5)CGA-3'found in the promoter (PubMed:9680223).</text>
</comment>
<comment type="disruption phenotype">
    <text evidence="4">Impairs the production of sterigmatocystin and leads to the accumulation of averufin.</text>
</comment>
<comment type="similarity">
    <text evidence="14">Belongs to the FAD-binding monooxygenase family.</text>
</comment>
<comment type="sequence caution" evidence="14">
    <conflict type="erroneous gene model prediction">
        <sequence resource="EMBL-CDS" id="AAC49207"/>
    </conflict>
</comment>
<comment type="sequence caution" evidence="14">
    <conflict type="erroneous gene model prediction">
        <sequence resource="EMBL-CDS" id="EAA61592"/>
    </conflict>
</comment>
<feature type="chain" id="PRO_0000186456" description="FAD-binding monooxygenase stcW">
    <location>
        <begin position="1"/>
        <end position="601"/>
    </location>
</feature>
<feature type="binding site" evidence="1">
    <location>
        <begin position="42"/>
        <end position="43"/>
    </location>
    <ligand>
        <name>FAD</name>
        <dbReference type="ChEBI" id="CHEBI:57692"/>
    </ligand>
</feature>
<feature type="binding site" evidence="1">
    <location>
        <position position="64"/>
    </location>
    <ligand>
        <name>FAD</name>
        <dbReference type="ChEBI" id="CHEBI:57692"/>
    </ligand>
</feature>
<feature type="binding site" evidence="1">
    <location>
        <position position="73"/>
    </location>
    <ligand>
        <name>FAD</name>
        <dbReference type="ChEBI" id="CHEBI:57692"/>
    </ligand>
</feature>
<feature type="binding site" evidence="1">
    <location>
        <position position="84"/>
    </location>
    <ligand>
        <name>FAD</name>
        <dbReference type="ChEBI" id="CHEBI:57692"/>
    </ligand>
</feature>
<feature type="binding site" evidence="1">
    <location>
        <position position="90"/>
    </location>
    <ligand>
        <name>FAD</name>
        <dbReference type="ChEBI" id="CHEBI:57692"/>
    </ligand>
</feature>
<feature type="binding site" evidence="1">
    <location>
        <position position="133"/>
    </location>
    <ligand>
        <name>FAD</name>
        <dbReference type="ChEBI" id="CHEBI:57692"/>
    </ligand>
</feature>
<feature type="site" description="Transition state stabilizer" evidence="3">
    <location>
        <position position="335"/>
    </location>
</feature>
<keyword id="KW-0274">FAD</keyword>
<keyword id="KW-0285">Flavoprotein</keyword>
<keyword id="KW-0503">Monooxygenase</keyword>
<keyword id="KW-0560">Oxidoreductase</keyword>
<keyword id="KW-1185">Reference proteome</keyword>
<proteinExistence type="evidence at transcript level"/>
<dbReference type="EC" id="1.14.13.-" evidence="15"/>
<dbReference type="EMBL" id="U34740">
    <property type="protein sequence ID" value="AAC49207.1"/>
    <property type="status" value="ALT_SEQ"/>
    <property type="molecule type" value="Genomic_DNA"/>
</dbReference>
<dbReference type="EMBL" id="AACD01000132">
    <property type="protein sequence ID" value="EAA61592.1"/>
    <property type="status" value="ALT_SEQ"/>
    <property type="molecule type" value="Genomic_DNA"/>
</dbReference>
<dbReference type="EMBL" id="BN001304">
    <property type="protein sequence ID" value="CBF80142.1"/>
    <property type="molecule type" value="Genomic_DNA"/>
</dbReference>
<dbReference type="RefSeq" id="XP_681073.1">
    <property type="nucleotide sequence ID" value="XM_675981.1"/>
</dbReference>
<dbReference type="SMR" id="Q00730"/>
<dbReference type="STRING" id="227321.Q00730"/>
<dbReference type="EnsemblFungi" id="CBF80142">
    <property type="protein sequence ID" value="CBF80142"/>
    <property type="gene ID" value="ANIA_07804"/>
</dbReference>
<dbReference type="VEuPathDB" id="FungiDB:AN7804"/>
<dbReference type="eggNOG" id="KOG1399">
    <property type="taxonomic scope" value="Eukaryota"/>
</dbReference>
<dbReference type="HOGENOM" id="CLU_006937_6_0_1"/>
<dbReference type="InParanoid" id="Q00730"/>
<dbReference type="OMA" id="MVFHTEV"/>
<dbReference type="OrthoDB" id="74360at2759"/>
<dbReference type="UniPathway" id="UPA00377"/>
<dbReference type="Proteomes" id="UP000000560">
    <property type="component" value="Chromosome IV"/>
</dbReference>
<dbReference type="GO" id="GO:0050660">
    <property type="term" value="F:flavin adenine dinucleotide binding"/>
    <property type="evidence" value="ECO:0007669"/>
    <property type="project" value="InterPro"/>
</dbReference>
<dbReference type="GO" id="GO:0004497">
    <property type="term" value="F:monooxygenase activity"/>
    <property type="evidence" value="ECO:0000315"/>
    <property type="project" value="AspGD"/>
</dbReference>
<dbReference type="GO" id="GO:0004499">
    <property type="term" value="F:N,N-dimethylaniline monooxygenase activity"/>
    <property type="evidence" value="ECO:0007669"/>
    <property type="project" value="InterPro"/>
</dbReference>
<dbReference type="GO" id="GO:0050661">
    <property type="term" value="F:NADP binding"/>
    <property type="evidence" value="ECO:0007669"/>
    <property type="project" value="InterPro"/>
</dbReference>
<dbReference type="GO" id="GO:0045461">
    <property type="term" value="P:sterigmatocystin biosynthetic process"/>
    <property type="evidence" value="ECO:0000315"/>
    <property type="project" value="AspGD"/>
</dbReference>
<dbReference type="FunFam" id="3.50.50.60:FF:000341">
    <property type="entry name" value="Baeyer-Villiger monooxygenase"/>
    <property type="match status" value="1"/>
</dbReference>
<dbReference type="Gene3D" id="3.50.50.60">
    <property type="entry name" value="FAD/NAD(P)-binding domain"/>
    <property type="match status" value="2"/>
</dbReference>
<dbReference type="InterPro" id="IPR051209">
    <property type="entry name" value="FAD-bind_Monooxygenase_sf"/>
</dbReference>
<dbReference type="InterPro" id="IPR036188">
    <property type="entry name" value="FAD/NAD-bd_sf"/>
</dbReference>
<dbReference type="InterPro" id="IPR020946">
    <property type="entry name" value="Flavin_mOase-like"/>
</dbReference>
<dbReference type="PANTHER" id="PTHR42877:SF1">
    <property type="entry name" value="FAD-BINDING MONOOXYGENASE STCW"/>
    <property type="match status" value="1"/>
</dbReference>
<dbReference type="PANTHER" id="PTHR42877">
    <property type="entry name" value="L-ORNITHINE N(5)-MONOOXYGENASE-RELATED"/>
    <property type="match status" value="1"/>
</dbReference>
<dbReference type="Pfam" id="PF00743">
    <property type="entry name" value="FMO-like"/>
    <property type="match status" value="1"/>
</dbReference>
<dbReference type="SUPFAM" id="SSF51905">
    <property type="entry name" value="FAD/NAD(P)-binding domain"/>
    <property type="match status" value="1"/>
</dbReference>
<accession>Q00730</accession>
<accession>C8VDS6</accession>
<accession>Q5AV76</accession>
<organism>
    <name type="scientific">Emericella nidulans (strain FGSC A4 / ATCC 38163 / CBS 112.46 / NRRL 194 / M139)</name>
    <name type="common">Aspergillus nidulans</name>
    <dbReference type="NCBI Taxonomy" id="227321"/>
    <lineage>
        <taxon>Eukaryota</taxon>
        <taxon>Fungi</taxon>
        <taxon>Dikarya</taxon>
        <taxon>Ascomycota</taxon>
        <taxon>Pezizomycotina</taxon>
        <taxon>Eurotiomycetes</taxon>
        <taxon>Eurotiomycetidae</taxon>
        <taxon>Eurotiales</taxon>
        <taxon>Aspergillaceae</taxon>
        <taxon>Aspergillus</taxon>
        <taxon>Aspergillus subgen. Nidulantes</taxon>
    </lineage>
</organism>
<protein>
    <recommendedName>
        <fullName evidence="13">FAD-binding monooxygenase stcW</fullName>
        <ecNumber evidence="15">1.14.13.-</ecNumber>
    </recommendedName>
    <alternativeName>
        <fullName evidence="13">Sterigmatocystin biosynthesis cluster protein W</fullName>
    </alternativeName>
</protein>
<sequence>MTVHYVHEGPEPQESRYSIPQHTTWMDPNNRRLRVITIGAGFSGILMAYQIQKQCANIEHVVYEKNHDIGGTWLTNRYPNAGCDVPSHAYTYRFALYPDWPRYFSYASDIWEYLDKVCAAFKLRQYMQFRTEVIKACWNEEEGQWKVRLRRQRPGQEPEEFDDHCHILLNACGVLSNPKWPDTPGLHDRFKGRVIHTAAWPDDYGEVQWNSDRVAVIGSGASSIQAVAGIQPHVGHLDIFVRTGVWFGVLAGNTGAPTKIYSEAERAQFRSNPSALVEHTKSIEAEVNGMWGAFYRDSMAQKGASAFFRQRMASIIKDDRLAKGFTPTFGFGCRRITPGDPYMHAIQQANVDVHFTAVASCTEDGIVGADGIERLVDTIVCASGFDNTYRPQFPIIGRRGVDLRDKWKTNPEAYLGLAVPDMPNYITFIGPSWPIQNGSVMAPLHSVSEYAIQFLKKMQNENIRAWAPRQQITDRFNEHVQEWVKHTVWSDQCRSWYKNNETGRVNAIWPGSSLHYQAVIERPRYEDFEISYADANPWAHLGMGWTMLDRAGGKQADVSPHLCLENIDPVWFKSIGGDVDILRKQLEKGHTLPNNASHAEA</sequence>
<reference key="1">
    <citation type="journal article" date="1996" name="Proc. Natl. Acad. Sci. U.S.A.">
        <title>Twenty-five coregulated transcripts define a sterigmatocystin gene cluster in Aspergillus nidulans.</title>
        <authorList>
            <person name="Brown D.W."/>
            <person name="Yu J.-H."/>
            <person name="Kelkar H.S."/>
            <person name="Fernandes M."/>
            <person name="Nesbitt T.C."/>
            <person name="Keller N.P."/>
            <person name="Adams T.H."/>
            <person name="Leonard T.J."/>
        </authorList>
    </citation>
    <scope>NUCLEOTIDE SEQUENCE [GENOMIC DNA]</scope>
    <scope>INDUCTION</scope>
    <scope>FUNCTION</scope>
    <scope>PATHWAY</scope>
    <source>
        <strain>FGSC 26</strain>
    </source>
</reference>
<reference key="2">
    <citation type="journal article" date="2005" name="Nature">
        <title>Sequencing of Aspergillus nidulans and comparative analysis with A. fumigatus and A. oryzae.</title>
        <authorList>
            <person name="Galagan J.E."/>
            <person name="Calvo S.E."/>
            <person name="Cuomo C."/>
            <person name="Ma L.-J."/>
            <person name="Wortman J.R."/>
            <person name="Batzoglou S."/>
            <person name="Lee S.-I."/>
            <person name="Bastuerkmen M."/>
            <person name="Spevak C.C."/>
            <person name="Clutterbuck J."/>
            <person name="Kapitonov V."/>
            <person name="Jurka J."/>
            <person name="Scazzocchio C."/>
            <person name="Farman M.L."/>
            <person name="Butler J."/>
            <person name="Purcell S."/>
            <person name="Harris S."/>
            <person name="Braus G.H."/>
            <person name="Draht O."/>
            <person name="Busch S."/>
            <person name="D'Enfert C."/>
            <person name="Bouchier C."/>
            <person name="Goldman G.H."/>
            <person name="Bell-Pedersen D."/>
            <person name="Griffiths-Jones S."/>
            <person name="Doonan J.H."/>
            <person name="Yu J."/>
            <person name="Vienken K."/>
            <person name="Pain A."/>
            <person name="Freitag M."/>
            <person name="Selker E.U."/>
            <person name="Archer D.B."/>
            <person name="Penalva M.A."/>
            <person name="Oakley B.R."/>
            <person name="Momany M."/>
            <person name="Tanaka T."/>
            <person name="Kumagai T."/>
            <person name="Asai K."/>
            <person name="Machida M."/>
            <person name="Nierman W.C."/>
            <person name="Denning D.W."/>
            <person name="Caddick M.X."/>
            <person name="Hynes M."/>
            <person name="Paoletti M."/>
            <person name="Fischer R."/>
            <person name="Miller B.L."/>
            <person name="Dyer P.S."/>
            <person name="Sachs M.S."/>
            <person name="Osmani S.A."/>
            <person name="Birren B.W."/>
        </authorList>
    </citation>
    <scope>NUCLEOTIDE SEQUENCE [LARGE SCALE GENOMIC DNA]</scope>
    <source>
        <strain>FGSC A4 / ATCC 38163 / CBS 112.46 / NRRL 194 / M139</strain>
    </source>
</reference>
<reference key="3">
    <citation type="journal article" date="2009" name="Fungal Genet. Biol.">
        <title>The 2008 update of the Aspergillus nidulans genome annotation: a community effort.</title>
        <authorList>
            <person name="Wortman J.R."/>
            <person name="Gilsenan J.M."/>
            <person name="Joardar V."/>
            <person name="Deegan J."/>
            <person name="Clutterbuck J."/>
            <person name="Andersen M.R."/>
            <person name="Archer D."/>
            <person name="Bencina M."/>
            <person name="Braus G."/>
            <person name="Coutinho P."/>
            <person name="von Dohren H."/>
            <person name="Doonan J."/>
            <person name="Driessen A.J."/>
            <person name="Durek P."/>
            <person name="Espeso E."/>
            <person name="Fekete E."/>
            <person name="Flipphi M."/>
            <person name="Estrada C.G."/>
            <person name="Geysens S."/>
            <person name="Goldman G."/>
            <person name="de Groot P.W."/>
            <person name="Hansen K."/>
            <person name="Harris S.D."/>
            <person name="Heinekamp T."/>
            <person name="Helmstaedt K."/>
            <person name="Henrissat B."/>
            <person name="Hofmann G."/>
            <person name="Homan T."/>
            <person name="Horio T."/>
            <person name="Horiuchi H."/>
            <person name="James S."/>
            <person name="Jones M."/>
            <person name="Karaffa L."/>
            <person name="Karanyi Z."/>
            <person name="Kato M."/>
            <person name="Keller N."/>
            <person name="Kelly D.E."/>
            <person name="Kiel J.A."/>
            <person name="Kim J.M."/>
            <person name="van der Klei I.J."/>
            <person name="Klis F.M."/>
            <person name="Kovalchuk A."/>
            <person name="Krasevec N."/>
            <person name="Kubicek C.P."/>
            <person name="Liu B."/>
            <person name="Maccabe A."/>
            <person name="Meyer V."/>
            <person name="Mirabito P."/>
            <person name="Miskei M."/>
            <person name="Mos M."/>
            <person name="Mullins J."/>
            <person name="Nelson D.R."/>
            <person name="Nielsen J."/>
            <person name="Oakley B.R."/>
            <person name="Osmani S.A."/>
            <person name="Pakula T."/>
            <person name="Paszewski A."/>
            <person name="Paulsen I."/>
            <person name="Pilsyk S."/>
            <person name="Pocsi I."/>
            <person name="Punt P.J."/>
            <person name="Ram A.F."/>
            <person name="Ren Q."/>
            <person name="Robellet X."/>
            <person name="Robson G."/>
            <person name="Seiboth B."/>
            <person name="van Solingen P."/>
            <person name="Specht T."/>
            <person name="Sun J."/>
            <person name="Taheri-Talesh N."/>
            <person name="Takeshita N."/>
            <person name="Ussery D."/>
            <person name="vanKuyk P.A."/>
            <person name="Visser H."/>
            <person name="van de Vondervoort P.J."/>
            <person name="de Vries R.P."/>
            <person name="Walton J."/>
            <person name="Xiang X."/>
            <person name="Xiong Y."/>
            <person name="Zeng A.P."/>
            <person name="Brandt B.W."/>
            <person name="Cornell M.J."/>
            <person name="van den Hondel C.A."/>
            <person name="Visser J."/>
            <person name="Oliver S.G."/>
            <person name="Turner G."/>
        </authorList>
    </citation>
    <scope>GENOME REANNOTATION</scope>
    <source>
        <strain>FGSC A4 / ATCC 38163 / CBS 112.46 / NRRL 194 / M139</strain>
    </source>
</reference>
<reference key="4">
    <citation type="journal article" date="1994" name="Appl. Environ. Microbiol.">
        <title>Aspergillus nidulans verA is required for production of the mycotoxin sterigmatocystin.</title>
        <authorList>
            <person name="Keller N.P."/>
            <person name="Kantz N.J."/>
            <person name="Adams T.H."/>
        </authorList>
    </citation>
    <scope>FUNCTION</scope>
    <scope>INDUCTION</scope>
</reference>
<reference key="5">
    <citation type="journal article" date="1995" name="Appl. Environ. Microbiol.">
        <title>StcS, a putative P-450 monooxygenase, is required for the conversion of versicolorin A to sterigmatocystin in Aspergillus nidulans.</title>
        <authorList>
            <person name="Keller N.P."/>
            <person name="Segner S."/>
            <person name="Bhatnagar D."/>
            <person name="Adams T.H."/>
        </authorList>
    </citation>
    <scope>FUNCTION</scope>
</reference>
<reference key="6">
    <citation type="journal article" date="1995" name="J. Bacteriol.">
        <title>Sterigmatocystin biosynthesis in Aspergillus nidulans requires a novel type I polyketide synthase.</title>
        <authorList>
            <person name="Yu J.-H."/>
            <person name="Leonard T.J."/>
        </authorList>
    </citation>
    <scope>FUNCTION</scope>
    <source>
        <strain>FGSC A4 / ATCC 38163 / CBS 112.46 / NRRL 194 / M139</strain>
    </source>
</reference>
<reference key="7">
    <citation type="journal article" date="1996" name="Appl. Environ. Microbiol.">
        <title>Aspergillus nidulans stcP encodes an O-methyltransferase that is required for sterigmatocystin biosynthesis.</title>
        <authorList>
            <person name="Kelkar H.S."/>
            <person name="Keller N.P."/>
            <person name="Adams T.H."/>
        </authorList>
    </citation>
    <scope>FUNCTION</scope>
</reference>
<reference key="8">
    <citation type="journal article" date="1996" name="Proc. Natl. Acad. Sci. U.S.A.">
        <title>Aspergillus has distinct fatty acid synthases for primary and secondary metabolism.</title>
        <authorList>
            <person name="Brown D.W."/>
            <person name="Adams T.H."/>
            <person name="Keller N.P."/>
        </authorList>
    </citation>
    <scope>FUNCTION</scope>
</reference>
<reference key="9">
    <citation type="journal article" date="1997" name="J. Biol. Chem.">
        <title>Aspergillus nidulans stcL encodes a putative cytochrome P-450 monooxygenase required for bisfuran desaturation during aflatoxin/sterigmatocystin biosynthesis.</title>
        <authorList>
            <person name="Kelkar H.S."/>
            <person name="Skloss T.W."/>
            <person name="Haw J.F."/>
            <person name="Keller N.P."/>
            <person name="Adams T.H."/>
        </authorList>
    </citation>
    <scope>FUNCTION</scope>
</reference>
<reference key="10">
    <citation type="journal article" date="1998" name="Mol. Microbiol.">
        <title>Sequence-specific binding by Aspergillus nidulans aflR, a C6 zinc cluster protein regulating mycotoxin biosynthesis.</title>
        <authorList>
            <person name="Fernandes M."/>
            <person name="Keller N.P."/>
            <person name="Adams T.H."/>
        </authorList>
    </citation>
    <scope>INDUCTION</scope>
</reference>
<reference key="11">
    <citation type="journal article" date="2000" name="Appl. Environ. Microbiol.">
        <title>Requirement of monooxygenase-mediated steps for sterigmatocystin biosynthesis by Aspergillus nidulans.</title>
        <authorList>
            <person name="Keller N.P."/>
            <person name="Watanabe C.M."/>
            <person name="Kelkar H.S."/>
            <person name="Adams T.H."/>
            <person name="Townsend C.A."/>
        </authorList>
    </citation>
    <scope>FUNCTION</scope>
    <scope>DISRUPTION PHENOTYPE</scope>
    <scope>PATHWAY</scope>
</reference>
<reference key="12">
    <citation type="journal article" date="2012" name="Metabolites">
        <title>Genetics of polyketide metabolism in Aspergillus nidulans.</title>
        <authorList>
            <person name="Klejnstrup M.L."/>
            <person name="Frandsen R.J."/>
            <person name="Holm D.K."/>
            <person name="Nielsen M.T."/>
            <person name="Mortensen U.H."/>
            <person name="Larsen T.O."/>
            <person name="Nielsen J.B."/>
        </authorList>
    </citation>
    <scope>REVIEW ON STERIGMATOCYSTIN BIOSYNTHESIS</scope>
</reference>
<evidence type="ECO:0000250" key="1"/>
<evidence type="ECO:0000250" key="2">
    <source>
        <dbReference type="UniProtKB" id="Q12053"/>
    </source>
</evidence>
<evidence type="ECO:0000255" key="3"/>
<evidence type="ECO:0000269" key="4">
    <source>
    </source>
</evidence>
<evidence type="ECO:0000269" key="5">
    <source>
    </source>
</evidence>
<evidence type="ECO:0000269" key="6">
    <source>
    </source>
</evidence>
<evidence type="ECO:0000269" key="7">
    <source>
    </source>
</evidence>
<evidence type="ECO:0000269" key="8">
    <source>
    </source>
</evidence>
<evidence type="ECO:0000269" key="9">
    <source>
    </source>
</evidence>
<evidence type="ECO:0000269" key="10">
    <source>
    </source>
</evidence>
<evidence type="ECO:0000269" key="11">
    <source>
    </source>
</evidence>
<evidence type="ECO:0000303" key="12">
    <source>
    </source>
</evidence>
<evidence type="ECO:0000303" key="13">
    <source>
    </source>
</evidence>
<evidence type="ECO:0000305" key="14"/>
<evidence type="ECO:0000305" key="15">
    <source>
    </source>
</evidence>
<evidence type="ECO:0000305" key="16">
    <source>
    </source>
</evidence>